<accession>A8S6B0</accession>
<organism>
    <name type="scientific">Austrelaps superbus</name>
    <name type="common">Lowland copperhead snake</name>
    <name type="synonym">Hoplocephalus superbus</name>
    <dbReference type="NCBI Taxonomy" id="29156"/>
    <lineage>
        <taxon>Eukaryota</taxon>
        <taxon>Metazoa</taxon>
        <taxon>Chordata</taxon>
        <taxon>Craniata</taxon>
        <taxon>Vertebrata</taxon>
        <taxon>Euteleostomi</taxon>
        <taxon>Lepidosauria</taxon>
        <taxon>Squamata</taxon>
        <taxon>Bifurcata</taxon>
        <taxon>Unidentata</taxon>
        <taxon>Episquamata</taxon>
        <taxon>Toxicofera</taxon>
        <taxon>Serpentes</taxon>
        <taxon>Colubroidea</taxon>
        <taxon>Elapidae</taxon>
        <taxon>Hydrophiinae</taxon>
        <taxon>Austrelaps</taxon>
    </lineage>
</organism>
<sequence>MKTLLLTLVVVTIVCLDLGDGLICYVDSKTSRTCPPGENVCFTETWCDARCSLLGKRVDLGCAATCPTAKPGVDITCCSTDKCNPFPTQKHR</sequence>
<comment type="function">
    <text evidence="2">Binds with high affinity to muscular (alpha-1/CHRNA1) and neuronal (alpha-7/CHRNA7) nicotinic acetylcholine receptor (nAChR) and inhibits acetylcholine from binding to the receptor, thereby impairing neuromuscular and neuronal transmission.</text>
</comment>
<comment type="subcellular location">
    <subcellularLocation>
        <location evidence="1">Secreted</location>
    </subcellularLocation>
</comment>
<comment type="tissue specificity">
    <text evidence="3">Expressed by the venom gland.</text>
</comment>
<comment type="similarity">
    <text evidence="3">Belongs to the three-finger toxin family. Long-chain subfamily. Type II alpha-neurotoxin sub-subfamily.</text>
</comment>
<keyword id="KW-0008">Acetylcholine receptor inhibiting toxin</keyword>
<keyword id="KW-1015">Disulfide bond</keyword>
<keyword id="KW-0872">Ion channel impairing toxin</keyword>
<keyword id="KW-0528">Neurotoxin</keyword>
<keyword id="KW-0629">Postsynaptic neurotoxin</keyword>
<keyword id="KW-0964">Secreted</keyword>
<keyword id="KW-0732">Signal</keyword>
<keyword id="KW-0800">Toxin</keyword>
<reference key="1">
    <citation type="journal article" date="2007" name="Cell. Mol. Life Sci.">
        <title>Distinct activities of novel neurotoxins from Australian venomous snakes for nicotinic acetylcholine receptors.</title>
        <authorList>
            <person name="St Pierre L."/>
            <person name="Fischer H."/>
            <person name="Adams D.J."/>
            <person name="Schenning M."/>
            <person name="Lavidis N."/>
            <person name="de Jersey J."/>
            <person name="Masci P.P."/>
            <person name="Lavin M.F."/>
        </authorList>
    </citation>
    <scope>NUCLEOTIDE SEQUENCE [MRNA]</scope>
    <source>
        <tissue>Venom gland</tissue>
    </source>
</reference>
<feature type="signal peptide" evidence="1">
    <location>
        <begin position="1"/>
        <end position="21"/>
    </location>
</feature>
<feature type="chain" id="PRO_5000282346" description="Alpha-elapitoxin-As2a">
    <location>
        <begin position="22"/>
        <end position="92"/>
    </location>
</feature>
<feature type="disulfide bond" evidence="1">
    <location>
        <begin position="24"/>
        <end position="41"/>
    </location>
</feature>
<feature type="disulfide bond" evidence="1">
    <location>
        <begin position="34"/>
        <end position="62"/>
    </location>
</feature>
<feature type="disulfide bond" evidence="1">
    <location>
        <begin position="47"/>
        <end position="51"/>
    </location>
</feature>
<feature type="disulfide bond" evidence="1">
    <location>
        <begin position="66"/>
        <end position="77"/>
    </location>
</feature>
<feature type="disulfide bond" evidence="1">
    <location>
        <begin position="78"/>
        <end position="83"/>
    </location>
</feature>
<evidence type="ECO:0000250" key="1"/>
<evidence type="ECO:0000250" key="2">
    <source>
        <dbReference type="UniProtKB" id="P60615"/>
    </source>
</evidence>
<evidence type="ECO:0000305" key="3"/>
<dbReference type="EMBL" id="EF599319">
    <property type="protein sequence ID" value="ABW24176.1"/>
    <property type="molecule type" value="mRNA"/>
</dbReference>
<dbReference type="SMR" id="A8S6B0"/>
<dbReference type="GO" id="GO:0005576">
    <property type="term" value="C:extracellular region"/>
    <property type="evidence" value="ECO:0007669"/>
    <property type="project" value="UniProtKB-SubCell"/>
</dbReference>
<dbReference type="GO" id="GO:0030550">
    <property type="term" value="F:acetylcholine receptor inhibitor activity"/>
    <property type="evidence" value="ECO:0007669"/>
    <property type="project" value="UniProtKB-KW"/>
</dbReference>
<dbReference type="GO" id="GO:0099106">
    <property type="term" value="F:ion channel regulator activity"/>
    <property type="evidence" value="ECO:0007669"/>
    <property type="project" value="UniProtKB-KW"/>
</dbReference>
<dbReference type="GO" id="GO:0090729">
    <property type="term" value="F:toxin activity"/>
    <property type="evidence" value="ECO:0007669"/>
    <property type="project" value="UniProtKB-KW"/>
</dbReference>
<dbReference type="CDD" id="cd00206">
    <property type="entry name" value="TFP_snake_toxin"/>
    <property type="match status" value="1"/>
</dbReference>
<dbReference type="Gene3D" id="2.10.60.10">
    <property type="entry name" value="CD59"/>
    <property type="match status" value="1"/>
</dbReference>
<dbReference type="InterPro" id="IPR003571">
    <property type="entry name" value="Snake_3FTx"/>
</dbReference>
<dbReference type="InterPro" id="IPR045860">
    <property type="entry name" value="Snake_toxin-like_sf"/>
</dbReference>
<dbReference type="InterPro" id="IPR018354">
    <property type="entry name" value="Snake_toxin_con_site"/>
</dbReference>
<dbReference type="InterPro" id="IPR054131">
    <property type="entry name" value="Toxin_cobra-type"/>
</dbReference>
<dbReference type="Pfam" id="PF21947">
    <property type="entry name" value="Toxin_cobra-type"/>
    <property type="match status" value="1"/>
</dbReference>
<dbReference type="SUPFAM" id="SSF57302">
    <property type="entry name" value="Snake toxin-like"/>
    <property type="match status" value="1"/>
</dbReference>
<dbReference type="PROSITE" id="PS00272">
    <property type="entry name" value="SNAKE_TOXIN"/>
    <property type="match status" value="1"/>
</dbReference>
<proteinExistence type="inferred from homology"/>
<protein>
    <recommendedName>
        <fullName>Alpha-elapitoxin-As2a</fullName>
        <shortName>Alpha-EPTX-As2a</shortName>
    </recommendedName>
    <alternativeName>
        <fullName>Long neurotoxin 2</fullName>
        <shortName>LNTX-2</shortName>
    </alternativeName>
</protein>
<name>3L22_AUSSU</name>